<organism>
    <name type="scientific">Vibrio vulnificus (strain YJ016)</name>
    <dbReference type="NCBI Taxonomy" id="196600"/>
    <lineage>
        <taxon>Bacteria</taxon>
        <taxon>Pseudomonadati</taxon>
        <taxon>Pseudomonadota</taxon>
        <taxon>Gammaproteobacteria</taxon>
        <taxon>Vibrionales</taxon>
        <taxon>Vibrionaceae</taxon>
        <taxon>Vibrio</taxon>
    </lineage>
</organism>
<keyword id="KW-0240">DNA-directed RNA polymerase</keyword>
<keyword id="KW-0548">Nucleotidyltransferase</keyword>
<keyword id="KW-0804">Transcription</keyword>
<keyword id="KW-0808">Transferase</keyword>
<protein>
    <recommendedName>
        <fullName evidence="1">DNA-directed RNA polymerase subunit beta</fullName>
        <shortName evidence="1">RNAP subunit beta</shortName>
        <ecNumber evidence="1">2.7.7.6</ecNumber>
    </recommendedName>
    <alternativeName>
        <fullName evidence="1">RNA polymerase subunit beta</fullName>
    </alternativeName>
    <alternativeName>
        <fullName evidence="1">Transcriptase subunit beta</fullName>
    </alternativeName>
</protein>
<reference key="1">
    <citation type="journal article" date="2003" name="Genome Res.">
        <title>Comparative genome analysis of Vibrio vulnificus, a marine pathogen.</title>
        <authorList>
            <person name="Chen C.-Y."/>
            <person name="Wu K.-M."/>
            <person name="Chang Y.-C."/>
            <person name="Chang C.-H."/>
            <person name="Tsai H.-C."/>
            <person name="Liao T.-L."/>
            <person name="Liu Y.-M."/>
            <person name="Chen H.-J."/>
            <person name="Shen A.B.-T."/>
            <person name="Li J.-C."/>
            <person name="Su T.-L."/>
            <person name="Shao C.-P."/>
            <person name="Lee C.-T."/>
            <person name="Hor L.-I."/>
            <person name="Tsai S.-F."/>
        </authorList>
    </citation>
    <scope>NUCLEOTIDE SEQUENCE [LARGE SCALE GENOMIC DNA]</scope>
    <source>
        <strain>YJ016</strain>
    </source>
</reference>
<feature type="chain" id="PRO_0000047995" description="DNA-directed RNA polymerase subunit beta">
    <location>
        <begin position="1"/>
        <end position="1342"/>
    </location>
</feature>
<name>RPOB_VIBVY</name>
<gene>
    <name evidence="1" type="primary">rpoB</name>
    <name type="ordered locus">VV3159</name>
</gene>
<dbReference type="EC" id="2.7.7.6" evidence="1"/>
<dbReference type="EMBL" id="BA000037">
    <property type="protein sequence ID" value="BAC95923.1"/>
    <property type="molecule type" value="Genomic_DNA"/>
</dbReference>
<dbReference type="RefSeq" id="WP_011079201.1">
    <property type="nucleotide sequence ID" value="NC_005139.1"/>
</dbReference>
<dbReference type="SMR" id="Q7MGR8"/>
<dbReference type="STRING" id="672.VV93_v1c28760"/>
<dbReference type="KEGG" id="vvy:VV3159"/>
<dbReference type="eggNOG" id="COG0085">
    <property type="taxonomic scope" value="Bacteria"/>
</dbReference>
<dbReference type="HOGENOM" id="CLU_000524_4_3_6"/>
<dbReference type="Proteomes" id="UP000002675">
    <property type="component" value="Chromosome I"/>
</dbReference>
<dbReference type="GO" id="GO:0000428">
    <property type="term" value="C:DNA-directed RNA polymerase complex"/>
    <property type="evidence" value="ECO:0007669"/>
    <property type="project" value="UniProtKB-KW"/>
</dbReference>
<dbReference type="GO" id="GO:0003677">
    <property type="term" value="F:DNA binding"/>
    <property type="evidence" value="ECO:0007669"/>
    <property type="project" value="UniProtKB-UniRule"/>
</dbReference>
<dbReference type="GO" id="GO:0003899">
    <property type="term" value="F:DNA-directed RNA polymerase activity"/>
    <property type="evidence" value="ECO:0007669"/>
    <property type="project" value="UniProtKB-UniRule"/>
</dbReference>
<dbReference type="GO" id="GO:0032549">
    <property type="term" value="F:ribonucleoside binding"/>
    <property type="evidence" value="ECO:0007669"/>
    <property type="project" value="InterPro"/>
</dbReference>
<dbReference type="GO" id="GO:0006351">
    <property type="term" value="P:DNA-templated transcription"/>
    <property type="evidence" value="ECO:0007669"/>
    <property type="project" value="UniProtKB-UniRule"/>
</dbReference>
<dbReference type="CDD" id="cd00653">
    <property type="entry name" value="RNA_pol_B_RPB2"/>
    <property type="match status" value="1"/>
</dbReference>
<dbReference type="FunFam" id="2.30.150.10:FF:000001">
    <property type="entry name" value="DNA-directed RNA polymerase subunit beta"/>
    <property type="match status" value="1"/>
</dbReference>
<dbReference type="FunFam" id="2.40.270.10:FF:000003">
    <property type="entry name" value="DNA-directed RNA polymerase subunit beta"/>
    <property type="match status" value="1"/>
</dbReference>
<dbReference type="FunFam" id="2.40.270.10:FF:000004">
    <property type="entry name" value="DNA-directed RNA polymerase subunit beta"/>
    <property type="match status" value="1"/>
</dbReference>
<dbReference type="FunFam" id="2.40.50.100:FF:000006">
    <property type="entry name" value="DNA-directed RNA polymerase subunit beta"/>
    <property type="match status" value="1"/>
</dbReference>
<dbReference type="FunFam" id="2.40.50.150:FF:000001">
    <property type="entry name" value="DNA-directed RNA polymerase subunit beta"/>
    <property type="match status" value="1"/>
</dbReference>
<dbReference type="FunFam" id="3.90.1100.10:FF:000002">
    <property type="entry name" value="DNA-directed RNA polymerase subunit beta"/>
    <property type="match status" value="1"/>
</dbReference>
<dbReference type="FunFam" id="3.90.1110.10:FF:000001">
    <property type="entry name" value="DNA-directed RNA polymerase subunit beta"/>
    <property type="match status" value="1"/>
</dbReference>
<dbReference type="FunFam" id="3.90.1110.10:FF:000004">
    <property type="entry name" value="DNA-directed RNA polymerase subunit beta"/>
    <property type="match status" value="1"/>
</dbReference>
<dbReference type="FunFam" id="3.90.1800.10:FF:000001">
    <property type="entry name" value="DNA-directed RNA polymerase subunit beta"/>
    <property type="match status" value="1"/>
</dbReference>
<dbReference type="Gene3D" id="2.40.50.100">
    <property type="match status" value="1"/>
</dbReference>
<dbReference type="Gene3D" id="2.40.50.150">
    <property type="match status" value="1"/>
</dbReference>
<dbReference type="Gene3D" id="3.90.1100.10">
    <property type="match status" value="2"/>
</dbReference>
<dbReference type="Gene3D" id="6.10.140.1670">
    <property type="match status" value="1"/>
</dbReference>
<dbReference type="Gene3D" id="2.30.150.10">
    <property type="entry name" value="DNA-directed RNA polymerase, beta subunit, external 1 domain"/>
    <property type="match status" value="1"/>
</dbReference>
<dbReference type="Gene3D" id="2.40.270.10">
    <property type="entry name" value="DNA-directed RNA polymerase, subunit 2, domain 6"/>
    <property type="match status" value="1"/>
</dbReference>
<dbReference type="Gene3D" id="3.90.1800.10">
    <property type="entry name" value="RNA polymerase alpha subunit dimerisation domain"/>
    <property type="match status" value="1"/>
</dbReference>
<dbReference type="HAMAP" id="MF_01321">
    <property type="entry name" value="RNApol_bact_RpoB"/>
    <property type="match status" value="1"/>
</dbReference>
<dbReference type="InterPro" id="IPR042107">
    <property type="entry name" value="DNA-dir_RNA_pol_bsu_ext_1_sf"/>
</dbReference>
<dbReference type="InterPro" id="IPR019462">
    <property type="entry name" value="DNA-dir_RNA_pol_bsu_external_1"/>
</dbReference>
<dbReference type="InterPro" id="IPR015712">
    <property type="entry name" value="DNA-dir_RNA_pol_su2"/>
</dbReference>
<dbReference type="InterPro" id="IPR007120">
    <property type="entry name" value="DNA-dir_RNAP_su2_dom"/>
</dbReference>
<dbReference type="InterPro" id="IPR037033">
    <property type="entry name" value="DNA-dir_RNAP_su2_hyb_sf"/>
</dbReference>
<dbReference type="InterPro" id="IPR010243">
    <property type="entry name" value="RNA_pol_bsu_bac"/>
</dbReference>
<dbReference type="InterPro" id="IPR007121">
    <property type="entry name" value="RNA_pol_bsu_CS"/>
</dbReference>
<dbReference type="InterPro" id="IPR007644">
    <property type="entry name" value="RNA_pol_bsu_protrusion"/>
</dbReference>
<dbReference type="InterPro" id="IPR007642">
    <property type="entry name" value="RNA_pol_Rpb2_2"/>
</dbReference>
<dbReference type="InterPro" id="IPR007645">
    <property type="entry name" value="RNA_pol_Rpb2_3"/>
</dbReference>
<dbReference type="InterPro" id="IPR007641">
    <property type="entry name" value="RNA_pol_Rpb2_7"/>
</dbReference>
<dbReference type="InterPro" id="IPR014724">
    <property type="entry name" value="RNA_pol_RPB2_OB-fold"/>
</dbReference>
<dbReference type="NCBIfam" id="NF001616">
    <property type="entry name" value="PRK00405.1"/>
    <property type="match status" value="1"/>
</dbReference>
<dbReference type="NCBIfam" id="TIGR02013">
    <property type="entry name" value="rpoB"/>
    <property type="match status" value="1"/>
</dbReference>
<dbReference type="PANTHER" id="PTHR20856">
    <property type="entry name" value="DNA-DIRECTED RNA POLYMERASE I SUBUNIT 2"/>
    <property type="match status" value="1"/>
</dbReference>
<dbReference type="Pfam" id="PF04563">
    <property type="entry name" value="RNA_pol_Rpb2_1"/>
    <property type="match status" value="1"/>
</dbReference>
<dbReference type="Pfam" id="PF04561">
    <property type="entry name" value="RNA_pol_Rpb2_2"/>
    <property type="match status" value="2"/>
</dbReference>
<dbReference type="Pfam" id="PF04565">
    <property type="entry name" value="RNA_pol_Rpb2_3"/>
    <property type="match status" value="1"/>
</dbReference>
<dbReference type="Pfam" id="PF10385">
    <property type="entry name" value="RNA_pol_Rpb2_45"/>
    <property type="match status" value="1"/>
</dbReference>
<dbReference type="Pfam" id="PF00562">
    <property type="entry name" value="RNA_pol_Rpb2_6"/>
    <property type="match status" value="1"/>
</dbReference>
<dbReference type="Pfam" id="PF04560">
    <property type="entry name" value="RNA_pol_Rpb2_7"/>
    <property type="match status" value="1"/>
</dbReference>
<dbReference type="SUPFAM" id="SSF64484">
    <property type="entry name" value="beta and beta-prime subunits of DNA dependent RNA-polymerase"/>
    <property type="match status" value="1"/>
</dbReference>
<dbReference type="PROSITE" id="PS01166">
    <property type="entry name" value="RNA_POL_BETA"/>
    <property type="match status" value="1"/>
</dbReference>
<comment type="function">
    <text evidence="1">DNA-dependent RNA polymerase catalyzes the transcription of DNA into RNA using the four ribonucleoside triphosphates as substrates.</text>
</comment>
<comment type="catalytic activity">
    <reaction evidence="1">
        <text>RNA(n) + a ribonucleoside 5'-triphosphate = RNA(n+1) + diphosphate</text>
        <dbReference type="Rhea" id="RHEA:21248"/>
        <dbReference type="Rhea" id="RHEA-COMP:14527"/>
        <dbReference type="Rhea" id="RHEA-COMP:17342"/>
        <dbReference type="ChEBI" id="CHEBI:33019"/>
        <dbReference type="ChEBI" id="CHEBI:61557"/>
        <dbReference type="ChEBI" id="CHEBI:140395"/>
        <dbReference type="EC" id="2.7.7.6"/>
    </reaction>
</comment>
<comment type="subunit">
    <text evidence="1">The RNAP catalytic core consists of 2 alpha, 1 beta, 1 beta' and 1 omega subunit. When a sigma factor is associated with the core the holoenzyme is formed, which can initiate transcription.</text>
</comment>
<comment type="similarity">
    <text evidence="1">Belongs to the RNA polymerase beta chain family.</text>
</comment>
<evidence type="ECO:0000255" key="1">
    <source>
        <dbReference type="HAMAP-Rule" id="MF_01321"/>
    </source>
</evidence>
<proteinExistence type="inferred from homology"/>
<sequence>MVYSYTEKKRIRKDFGTRPQVLDIPYLLSIQLDSFDKFIEQDPEGQYGLEAAFRSVFPIQSYNGNSELQYVSYRLGEPVFDVKECQIRGVTYSKPLRVKLRLVIFDKDAPAGTVKDIKEQEVYMGEIPLMTDNGTFVINGTERVIVSQLHRSPGVFFDSDKGKTHSSGKVLYNARIIPYRGSWLDFEFDPKDNLYVRIDRRRKLPSTIILRALGKSTEEILDTFFEKVNFEVKDQTLMMELVPDRLRGETATFDIEANGTVYVEKGRRVTARHIRQLEKEGVDQIEVPVEYIVGKVSSKDYINEATGEIIVAANQEISLEALAKLSQAGHKQLEVLFTNDLDHGPFMSETLRIDSSVDRISALVEIYRMMRPGEPPTKEAAEALFESLFFSEERYDLSTVGRMKFNSSIGRDDAEEQGTLDETDIIEVMKKLIAIRNGKGEVDDIDHLGNRRIRSVGEMAENQFRVGLVRVERAVKERLSLGDLDAVMPQDLINAKPISAAVKEFFGSSQLSQFMDQNNPLSEVTHKRRISALGPGGLTRERAGFEVRDVHVTHYGRLCPIETPEGPNIGLINSLSAFARCNEYGFLETPYRRVVDGVVTDEVDYLSAIEEGQFVIAQANAKLNEDGTFADELITARQKGESGLHPREHVDYMDVATNQVVSIAASLIPFLEHDDANRALMGANMQRQAVPTLKAEKPLVGTGIERNVAVDSGVTSVAKRGGIIQSVDASRIVVKVNEEELIPGEAGIDIYNLTKYTRSNQNTCINQRPCVMPGEPVLRGDVLADGPSTDLGELALGQNMRIAFMPWNGYNFEDSILVSERVVQEDRFTTIHIQELTCVARDTKLGSEEITADIPNVGESALSKLDESGIVYIGAEVKGGDILVGKVTPKGETQLTPEEKLLRAIFGEKASDVKDTSLRVPNSVSGTIIDVQVFTRDGVEKDKRALEIEQMQLKEAKKDLTEEFQILEGGLLNRVKAVLLSGGYSEAKLDTTDRKKWLELTLEDDALQTQLEQLAEQYDELKADFDKKFETKRRKITQGDDLAPGVLKIVKVYLAVKRRIQPGDKMAGRHGNKGVISKINPVEDMPYDEKGQPVDIVLNPLGVPSRMNIGQILEVHLGLAAKGIGDKINQMVKEQQELAKFREFLQKVYDLGETRQKVDIASLSDEEVRTLIGNLRGGLPIATPVFDGASEASIKELLKLGGLPESGQLTLFDGRTGDAFERPVTVGYMYMLKLNHLVDDKMHARSTGSYSLVTQQPLGGKAQFGGQRFGEMEVWALEAYGAAYTLQEMLTVKSDDVNGRTKMYKNIVDGNHAMEPGMPESFNVLLKEIRSLGINIELEDEQ</sequence>
<accession>Q7MGR8</accession>